<proteinExistence type="inferred from homology"/>
<protein>
    <recommendedName>
        <fullName>Cytochrome c oxidase subunit 2</fullName>
        <ecNumber>7.1.1.9</ecNumber>
    </recommendedName>
    <alternativeName>
        <fullName>Cytochrome c oxidase polypeptide II</fullName>
    </alternativeName>
</protein>
<feature type="chain" id="PRO_0000183653" description="Cytochrome c oxidase subunit 2">
    <location>
        <begin position="1"/>
        <end position="205"/>
    </location>
</feature>
<feature type="binding site" evidence="1">
    <location>
        <position position="115"/>
    </location>
    <ligand>
        <name>Cu cation</name>
        <dbReference type="ChEBI" id="CHEBI:23378"/>
        <label>A1</label>
    </ligand>
</feature>
<feature type="binding site" evidence="1">
    <location>
        <position position="150"/>
    </location>
    <ligand>
        <name>Cu cation</name>
        <dbReference type="ChEBI" id="CHEBI:23378"/>
        <label>A1</label>
    </ligand>
</feature>
<feature type="binding site" evidence="1">
    <location>
        <position position="150"/>
    </location>
    <ligand>
        <name>Cu cation</name>
        <dbReference type="ChEBI" id="CHEBI:23378"/>
        <label>A2</label>
    </ligand>
</feature>
<feature type="binding site" evidence="1">
    <location>
        <position position="152"/>
    </location>
    <ligand>
        <name>Cu cation</name>
        <dbReference type="ChEBI" id="CHEBI:23378"/>
        <label>A2</label>
    </ligand>
</feature>
<feature type="binding site" evidence="1">
    <location>
        <position position="152"/>
    </location>
    <ligand>
        <name>Mg(2+)</name>
        <dbReference type="ChEBI" id="CHEBI:18420"/>
        <note>ligand shared with subunit 1</note>
    </ligand>
</feature>
<feature type="binding site" evidence="1">
    <location>
        <position position="154"/>
    </location>
    <ligand>
        <name>Cu cation</name>
        <dbReference type="ChEBI" id="CHEBI:23378"/>
        <label>A1</label>
    </ligand>
</feature>
<feature type="binding site" evidence="1">
    <location>
        <position position="154"/>
    </location>
    <ligand>
        <name>Cu cation</name>
        <dbReference type="ChEBI" id="CHEBI:23378"/>
        <label>A2</label>
    </ligand>
</feature>
<feature type="binding site" evidence="1">
    <location>
        <position position="158"/>
    </location>
    <ligand>
        <name>Cu cation</name>
        <dbReference type="ChEBI" id="CHEBI:23378"/>
        <label>A2</label>
    </ligand>
</feature>
<feature type="binding site" evidence="1">
    <location>
        <position position="161"/>
    </location>
    <ligand>
        <name>Cu cation</name>
        <dbReference type="ChEBI" id="CHEBI:23378"/>
        <label>A1</label>
    </ligand>
</feature>
<organism>
    <name type="scientific">Paramecium tetraurelia</name>
    <dbReference type="NCBI Taxonomy" id="5888"/>
    <lineage>
        <taxon>Eukaryota</taxon>
        <taxon>Sar</taxon>
        <taxon>Alveolata</taxon>
        <taxon>Ciliophora</taxon>
        <taxon>Intramacronucleata</taxon>
        <taxon>Oligohymenophorea</taxon>
        <taxon>Peniculida</taxon>
        <taxon>Parameciidae</taxon>
        <taxon>Paramecium</taxon>
    </lineage>
</organism>
<sequence length="205" mass="24312">MEKKMNTDLFYLTLKQKRYKRKKNIPLRIRLDKNDLSANTASIKFTDKPYLVANKIIKSLEFNATSLYRCIKKNKLRSENFSVQLSRRLLRTKKTLVLPSHVNITLISNSYDVIHSWFIPALGIKIDCVPGRATHHTFYCDSVGFYYGQCAEICGRYHHHMPIKLCILPFEHFLIWWQHFGLPKLLFTESKNRFETDYGLKKFCW</sequence>
<geneLocation type="mitochondrion"/>
<dbReference type="EC" id="7.1.1.9"/>
<dbReference type="EMBL" id="X15917">
    <property type="protein sequence ID" value="CAA34055.1"/>
    <property type="status" value="ALT_INIT"/>
    <property type="molecule type" value="Genomic_DNA"/>
</dbReference>
<dbReference type="EMBL" id="M15220">
    <property type="protein sequence ID" value="AAA32008.2"/>
    <property type="status" value="ALT_INIT"/>
    <property type="molecule type" value="Genomic_DNA"/>
</dbReference>
<dbReference type="PIR" id="S07746">
    <property type="entry name" value="S07746"/>
</dbReference>
<dbReference type="SMR" id="P08749"/>
<dbReference type="GO" id="GO:0005743">
    <property type="term" value="C:mitochondrial inner membrane"/>
    <property type="evidence" value="ECO:0007669"/>
    <property type="project" value="UniProtKB-SubCell"/>
</dbReference>
<dbReference type="GO" id="GO:0005507">
    <property type="term" value="F:copper ion binding"/>
    <property type="evidence" value="ECO:0007669"/>
    <property type="project" value="InterPro"/>
</dbReference>
<dbReference type="GO" id="GO:0004129">
    <property type="term" value="F:cytochrome-c oxidase activity"/>
    <property type="evidence" value="ECO:0007669"/>
    <property type="project" value="UniProtKB-EC"/>
</dbReference>
<dbReference type="Gene3D" id="2.60.40.420">
    <property type="entry name" value="Cupredoxins - blue copper proteins"/>
    <property type="match status" value="1"/>
</dbReference>
<dbReference type="InterPro" id="IPR045187">
    <property type="entry name" value="CcO_II"/>
</dbReference>
<dbReference type="InterPro" id="IPR002429">
    <property type="entry name" value="CcO_II-like_C"/>
</dbReference>
<dbReference type="InterPro" id="IPR001505">
    <property type="entry name" value="Copper_CuA"/>
</dbReference>
<dbReference type="InterPro" id="IPR008972">
    <property type="entry name" value="Cupredoxin"/>
</dbReference>
<dbReference type="PANTHER" id="PTHR22888:SF9">
    <property type="entry name" value="CYTOCHROME C OXIDASE SUBUNIT 2"/>
    <property type="match status" value="1"/>
</dbReference>
<dbReference type="PANTHER" id="PTHR22888">
    <property type="entry name" value="CYTOCHROME C OXIDASE, SUBUNIT II"/>
    <property type="match status" value="1"/>
</dbReference>
<dbReference type="Pfam" id="PF00116">
    <property type="entry name" value="COX2"/>
    <property type="match status" value="1"/>
</dbReference>
<dbReference type="PRINTS" id="PR01166">
    <property type="entry name" value="CYCOXIDASEII"/>
</dbReference>
<dbReference type="SUPFAM" id="SSF49503">
    <property type="entry name" value="Cupredoxins"/>
    <property type="match status" value="1"/>
</dbReference>
<dbReference type="PROSITE" id="PS00078">
    <property type="entry name" value="COX2"/>
    <property type="match status" value="1"/>
</dbReference>
<dbReference type="PROSITE" id="PS50857">
    <property type="entry name" value="COX2_CUA"/>
    <property type="match status" value="1"/>
</dbReference>
<keyword id="KW-0186">Copper</keyword>
<keyword id="KW-0249">Electron transport</keyword>
<keyword id="KW-0460">Magnesium</keyword>
<keyword id="KW-0472">Membrane</keyword>
<keyword id="KW-0479">Metal-binding</keyword>
<keyword id="KW-0496">Mitochondrion</keyword>
<keyword id="KW-0999">Mitochondrion inner membrane</keyword>
<keyword id="KW-0679">Respiratory chain</keyword>
<keyword id="KW-1278">Translocase</keyword>
<keyword id="KW-0813">Transport</keyword>
<evidence type="ECO:0000250" key="1">
    <source>
        <dbReference type="UniProtKB" id="P00410"/>
    </source>
</evidence>
<evidence type="ECO:0000305" key="2"/>
<comment type="function">
    <text evidence="1">Component of the cytochrome c oxidase, the last enzyme in the mitochondrial electron transport chain which drives oxidative phosphorylation. The respiratory chain contains 3 multisubunit complexes succinate dehydrogenase (complex II, CII), ubiquinol-cytochrome c oxidoreductase (cytochrome b-c1 complex, complex III, CIII) and cytochrome c oxidase (complex IV, CIV), that cooperate to transfer electrons derived from NADH and succinate to molecular oxygen, creating an electrochemical gradient over the inner membrane that drives transmembrane transport and the ATP synthase. Cytochrome c oxidase is the component of the respiratory chain that catalyzes the reduction of oxygen to water. Electrons originating from reduced cytochrome c in the intermembrane space (IMS) are transferred via the dinuclear copper A center (CU(A)) of subunit 2 and heme A of subunit 1 to the active site in subunit 1, a binuclear center (BNC) formed by heme A3 and copper B (CU(B)). The BNC reduces molecular oxygen to 2 water molecules using 4 electrons from cytochrome c in the IMS and 4 protons from the mitochondrial matrix.</text>
</comment>
<comment type="catalytic activity">
    <reaction evidence="1">
        <text>4 Fe(II)-[cytochrome c] + O2 + 8 H(+)(in) = 4 Fe(III)-[cytochrome c] + 2 H2O + 4 H(+)(out)</text>
        <dbReference type="Rhea" id="RHEA:11436"/>
        <dbReference type="Rhea" id="RHEA-COMP:10350"/>
        <dbReference type="Rhea" id="RHEA-COMP:14399"/>
        <dbReference type="ChEBI" id="CHEBI:15377"/>
        <dbReference type="ChEBI" id="CHEBI:15378"/>
        <dbReference type="ChEBI" id="CHEBI:15379"/>
        <dbReference type="ChEBI" id="CHEBI:29033"/>
        <dbReference type="ChEBI" id="CHEBI:29034"/>
        <dbReference type="EC" id="7.1.1.9"/>
    </reaction>
    <physiologicalReaction direction="left-to-right" evidence="1">
        <dbReference type="Rhea" id="RHEA:11437"/>
    </physiologicalReaction>
</comment>
<comment type="cofactor">
    <cofactor evidence="1">
        <name>Cu cation</name>
        <dbReference type="ChEBI" id="CHEBI:23378"/>
    </cofactor>
    <text evidence="1">Binds a dinuclear copper A center per subunit.</text>
</comment>
<comment type="subunit">
    <text evidence="1">Component of the cytochrome c oxidase (complex IV, CIV), a multisubunit enzyme composed of a catalytic core of 3 subunits and several supernumerary subunits. The complex exists as a monomer or a dimer and forms supercomplexes (SCs) in the inner mitochondrial membrane with ubiquinol-cytochrome c oxidoreductase (cytochrome b-c1 complex, complex III, CIII).</text>
</comment>
<comment type="subcellular location">
    <subcellularLocation>
        <location evidence="1">Mitochondrion inner membrane</location>
    </subcellularLocation>
</comment>
<comment type="similarity">
    <text evidence="2">Belongs to the cytochrome c oxidase subunit 2 family.</text>
</comment>
<comment type="sequence caution" evidence="2">
    <conflict type="erroneous initiation">
        <sequence resource="EMBL-CDS" id="AAA32008"/>
    </conflict>
</comment>
<comment type="sequence caution" evidence="2">
    <conflict type="erroneous initiation">
        <sequence resource="EMBL-CDS" id="CAA34055"/>
    </conflict>
</comment>
<reference key="1">
    <citation type="journal article" date="1990" name="Nucleic Acids Res.">
        <title>Nucleotide sequence of the mitochondrial genome of Paramecium.</title>
        <authorList>
            <person name="Pritchard A.E."/>
            <person name="Seilhamer J.J."/>
            <person name="Mahalingam R."/>
            <person name="Sable C.L."/>
            <person name="Venuti S.E."/>
            <person name="Cummings D.J."/>
        </authorList>
    </citation>
    <scope>NUCLEOTIDE SEQUENCE [GENOMIC DNA]</scope>
    <source>
        <strain>Stock 51</strain>
    </source>
</reference>
<reference key="2">
    <citation type="journal article" date="1986" name="Gene">
        <title>Identification of Paramecium mitochondrial proteins using antibodies raised against fused mitochondrial gene products.</title>
        <authorList>
            <person name="Mahalingam R."/>
            <person name="Seilhamer J.J."/>
            <person name="Pritchard A.E."/>
            <person name="Cummings D.J."/>
        </authorList>
    </citation>
    <scope>NUCLEOTIDE SEQUENCE [GENOMIC DNA]</scope>
</reference>
<accession>P08749</accession>
<name>COX2_PARTE</name>
<gene>
    <name type="primary">COII</name>
</gene>